<comment type="catalytic activity">
    <reaction>
        <text>(4,5-dihydro-5-oxofuran-2-yl)-acetate + H2O = 3-oxoadipate + H(+)</text>
        <dbReference type="Rhea" id="RHEA:10184"/>
        <dbReference type="ChEBI" id="CHEBI:15377"/>
        <dbReference type="ChEBI" id="CHEBI:15378"/>
        <dbReference type="ChEBI" id="CHEBI:15775"/>
        <dbReference type="ChEBI" id="CHEBI:58425"/>
        <dbReference type="EC" id="3.1.1.24"/>
    </reaction>
</comment>
<comment type="pathway">
    <text>Aromatic compound metabolism; beta-ketoadipate pathway; 3-oxoadipate from 5-oxo-4,5-dihydro-2-furylacetate: step 1/1.</text>
</comment>
<comment type="miscellaneous">
    <text>This species can form two 3-oxoadipate enol-lactonases in response to different inducers. The one shown is called enol-lactone hydrolase I by the authors.</text>
</comment>
<evidence type="ECO:0000255" key="1"/>
<proteinExistence type="predicted"/>
<sequence>MSEIHSIMITNRQGKTLSVQINGPENAPAIVFSNSLGTDHGMWQPQVAALKSQYRVVTYDTRGHGQSDVIENTTLQNLGEDVLDILDALNIEKAHFCGISMGGLTALWLGIYQAARFYSITVANSAAKIWTEDGWNARAEAVEANGLADLVASTHTRWFSDKFDYKNDNLAQKTIQSLADTPAQGYANACRALAKADVREKLASISIPTLIIAGSADPVTTITDGEFMQQHIQCNQFEVIDASHLSNIEQPEKFIQIFSGFVKSIQ</sequence>
<dbReference type="EC" id="3.1.1.24"/>
<dbReference type="EMBL" id="L05770">
    <property type="protein sequence ID" value="AAC37150.1"/>
    <property type="molecule type" value="Genomic_DNA"/>
</dbReference>
<dbReference type="EMBL" id="CR543861">
    <property type="protein sequence ID" value="CAG68550.1"/>
    <property type="molecule type" value="Genomic_DNA"/>
</dbReference>
<dbReference type="RefSeq" id="WP_004926626.1">
    <property type="nucleotide sequence ID" value="NC_005966.1"/>
</dbReference>
<dbReference type="SMR" id="Q59093"/>
<dbReference type="STRING" id="202950.GCA_001485005_03086"/>
<dbReference type="ESTHER" id="acica-elh1">
    <property type="family name" value="Carboxymethylbutenolide_lactonase"/>
</dbReference>
<dbReference type="GeneID" id="45234095"/>
<dbReference type="KEGG" id="aci:ACIAD1708"/>
<dbReference type="eggNOG" id="COG0596">
    <property type="taxonomic scope" value="Bacteria"/>
</dbReference>
<dbReference type="HOGENOM" id="CLU_020336_50_3_6"/>
<dbReference type="OrthoDB" id="9793083at2"/>
<dbReference type="BioCyc" id="ASP62977:ACIAD_RS07870-MONOMER"/>
<dbReference type="UniPathway" id="UPA00157">
    <property type="reaction ID" value="UER00261"/>
</dbReference>
<dbReference type="Proteomes" id="UP000000430">
    <property type="component" value="Chromosome"/>
</dbReference>
<dbReference type="GO" id="GO:0016020">
    <property type="term" value="C:membrane"/>
    <property type="evidence" value="ECO:0007669"/>
    <property type="project" value="TreeGrafter"/>
</dbReference>
<dbReference type="GO" id="GO:0047570">
    <property type="term" value="F:3-oxoadipate enol-lactonase activity"/>
    <property type="evidence" value="ECO:0007669"/>
    <property type="project" value="UniProtKB-EC"/>
</dbReference>
<dbReference type="GO" id="GO:0042952">
    <property type="term" value="P:beta-ketoadipate pathway"/>
    <property type="evidence" value="ECO:0007669"/>
    <property type="project" value="UniProtKB-UniPathway"/>
</dbReference>
<dbReference type="Gene3D" id="3.40.50.1820">
    <property type="entry name" value="alpha/beta hydrolase"/>
    <property type="match status" value="1"/>
</dbReference>
<dbReference type="InterPro" id="IPR000073">
    <property type="entry name" value="AB_hydrolase_1"/>
</dbReference>
<dbReference type="InterPro" id="IPR029058">
    <property type="entry name" value="AB_hydrolase_fold"/>
</dbReference>
<dbReference type="InterPro" id="IPR050266">
    <property type="entry name" value="AB_hydrolase_sf"/>
</dbReference>
<dbReference type="InterPro" id="IPR026968">
    <property type="entry name" value="PcaD/CatD"/>
</dbReference>
<dbReference type="NCBIfam" id="TIGR02427">
    <property type="entry name" value="protocat_pcaD"/>
    <property type="match status" value="1"/>
</dbReference>
<dbReference type="PANTHER" id="PTHR43798:SF33">
    <property type="entry name" value="HYDROLASE, PUTATIVE (AFU_ORTHOLOGUE AFUA_2G14860)-RELATED"/>
    <property type="match status" value="1"/>
</dbReference>
<dbReference type="PANTHER" id="PTHR43798">
    <property type="entry name" value="MONOACYLGLYCEROL LIPASE"/>
    <property type="match status" value="1"/>
</dbReference>
<dbReference type="Pfam" id="PF00561">
    <property type="entry name" value="Abhydrolase_1"/>
    <property type="match status" value="1"/>
</dbReference>
<dbReference type="PRINTS" id="PR00111">
    <property type="entry name" value="ABHYDROLASE"/>
</dbReference>
<dbReference type="SUPFAM" id="SSF53474">
    <property type="entry name" value="alpha/beta-Hydrolases"/>
    <property type="match status" value="1"/>
</dbReference>
<protein>
    <recommendedName>
        <fullName>3-oxoadipate enol-lactonase 1</fullName>
        <ecNumber>3.1.1.24</ecNumber>
    </recommendedName>
    <alternativeName>
        <fullName>3-oxoadipate enol-lactonase I</fullName>
    </alternativeName>
    <alternativeName>
        <fullName>Beta-ketoadipate enol-lactone hydrolase I</fullName>
    </alternativeName>
    <alternativeName>
        <fullName>Enol-lactone hydrolase I</fullName>
    </alternativeName>
</protein>
<gene>
    <name type="primary">pcaD</name>
    <name type="ordered locus">ACIAD1708</name>
</gene>
<accession>Q59093</accession>
<name>ELH1_ACIAD</name>
<reference key="1">
    <citation type="journal article" date="1994" name="Gene">
        <title>Acquisition of apparent DNA slippage structures during extensive evolutionary divergence of pcaD and catD genes encoding identical catalytic activities in Acinetobacter calcoaceticus.</title>
        <authorList>
            <person name="Hartnett G.B."/>
            <person name="Ornston L.N."/>
        </authorList>
    </citation>
    <scope>NUCLEOTIDE SEQUENCE [GENOMIC DNA]</scope>
</reference>
<reference key="2">
    <citation type="journal article" date="2004" name="Nucleic Acids Res.">
        <title>Unique features revealed by the genome sequence of Acinetobacter sp. ADP1, a versatile and naturally transformation competent bacterium.</title>
        <authorList>
            <person name="Barbe V."/>
            <person name="Vallenet D."/>
            <person name="Fonknechten N."/>
            <person name="Kreimeyer A."/>
            <person name="Oztas S."/>
            <person name="Labarre L."/>
            <person name="Cruveiller S."/>
            <person name="Robert C."/>
            <person name="Duprat S."/>
            <person name="Wincker P."/>
            <person name="Ornston L.N."/>
            <person name="Weissenbach J."/>
            <person name="Marliere P."/>
            <person name="Cohen G.N."/>
            <person name="Medigue C."/>
        </authorList>
    </citation>
    <scope>NUCLEOTIDE SEQUENCE [LARGE SCALE GENOMIC DNA]</scope>
    <source>
        <strain>ATCC 33305 / BD413 / ADP1</strain>
    </source>
</reference>
<organism>
    <name type="scientific">Acinetobacter baylyi (strain ATCC 33305 / BD413 / ADP1)</name>
    <dbReference type="NCBI Taxonomy" id="62977"/>
    <lineage>
        <taxon>Bacteria</taxon>
        <taxon>Pseudomonadati</taxon>
        <taxon>Pseudomonadota</taxon>
        <taxon>Gammaproteobacteria</taxon>
        <taxon>Moraxellales</taxon>
        <taxon>Moraxellaceae</taxon>
        <taxon>Acinetobacter</taxon>
    </lineage>
</organism>
<feature type="chain" id="PRO_0000086955" description="3-oxoadipate enol-lactonase 1">
    <location>
        <begin position="1"/>
        <end position="266"/>
    </location>
</feature>
<feature type="domain" description="AB hydrolase-1" evidence="1">
    <location>
        <begin position="28"/>
        <end position="250"/>
    </location>
</feature>
<keyword id="KW-0058">Aromatic hydrocarbons catabolism</keyword>
<keyword id="KW-0378">Hydrolase</keyword>